<accession>B0R3M1</accession>
<gene>
    <name evidence="1" type="primary">rps27e</name>
    <name type="ordered locus">OE_1820R</name>
</gene>
<name>RS27_HALS3</name>
<proteinExistence type="inferred from homology"/>
<dbReference type="EMBL" id="AM774415">
    <property type="protein sequence ID" value="CAP13335.1"/>
    <property type="molecule type" value="Genomic_DNA"/>
</dbReference>
<dbReference type="RefSeq" id="WP_010902367.1">
    <property type="nucleotide sequence ID" value="NC_010364.1"/>
</dbReference>
<dbReference type="SMR" id="B0R3M1"/>
<dbReference type="EnsemblBacteria" id="CAP13335">
    <property type="protein sequence ID" value="CAP13335"/>
    <property type="gene ID" value="OE_1820R"/>
</dbReference>
<dbReference type="KEGG" id="hsl:OE_1820R"/>
<dbReference type="HOGENOM" id="CLU_199465_0_0_2"/>
<dbReference type="PhylomeDB" id="B0R3M1"/>
<dbReference type="Proteomes" id="UP000001321">
    <property type="component" value="Chromosome"/>
</dbReference>
<dbReference type="GO" id="GO:1990904">
    <property type="term" value="C:ribonucleoprotein complex"/>
    <property type="evidence" value="ECO:0007669"/>
    <property type="project" value="UniProtKB-KW"/>
</dbReference>
<dbReference type="GO" id="GO:0005840">
    <property type="term" value="C:ribosome"/>
    <property type="evidence" value="ECO:0007669"/>
    <property type="project" value="UniProtKB-KW"/>
</dbReference>
<dbReference type="GO" id="GO:0003735">
    <property type="term" value="F:structural constituent of ribosome"/>
    <property type="evidence" value="ECO:0007669"/>
    <property type="project" value="InterPro"/>
</dbReference>
<dbReference type="GO" id="GO:0008270">
    <property type="term" value="F:zinc ion binding"/>
    <property type="evidence" value="ECO:0007669"/>
    <property type="project" value="UniProtKB-UniRule"/>
</dbReference>
<dbReference type="GO" id="GO:0006412">
    <property type="term" value="P:translation"/>
    <property type="evidence" value="ECO:0007669"/>
    <property type="project" value="UniProtKB-UniRule"/>
</dbReference>
<dbReference type="FunFam" id="2.20.25.100:FF:000006">
    <property type="entry name" value="30S ribosomal protein S27e"/>
    <property type="match status" value="1"/>
</dbReference>
<dbReference type="Gene3D" id="2.20.25.100">
    <property type="entry name" value="Zn-binding ribosomal proteins"/>
    <property type="match status" value="1"/>
</dbReference>
<dbReference type="HAMAP" id="MF_00371">
    <property type="entry name" value="Ribosomal_eS27"/>
    <property type="match status" value="1"/>
</dbReference>
<dbReference type="InterPro" id="IPR000592">
    <property type="entry name" value="Ribosomal_eS27"/>
</dbReference>
<dbReference type="InterPro" id="IPR023407">
    <property type="entry name" value="Ribosomal_eS27_Zn-bd_dom_sf"/>
</dbReference>
<dbReference type="InterPro" id="IPR011332">
    <property type="entry name" value="Ribosomal_zn-bd"/>
</dbReference>
<dbReference type="NCBIfam" id="NF001629">
    <property type="entry name" value="PRK00415.1"/>
    <property type="match status" value="1"/>
</dbReference>
<dbReference type="Pfam" id="PF01667">
    <property type="entry name" value="Ribosomal_S27e"/>
    <property type="match status" value="1"/>
</dbReference>
<dbReference type="SUPFAM" id="SSF57829">
    <property type="entry name" value="Zn-binding ribosomal proteins"/>
    <property type="match status" value="1"/>
</dbReference>
<dbReference type="PROSITE" id="PS01168">
    <property type="entry name" value="RIBOSOMAL_S27E"/>
    <property type="match status" value="1"/>
</dbReference>
<protein>
    <recommendedName>
        <fullName evidence="1">Small ribosomal subunit protein eS27</fullName>
    </recommendedName>
    <alternativeName>
        <fullName evidence="2">30S ribosomal protein S27e</fullName>
    </alternativeName>
</protein>
<feature type="chain" id="PRO_1000121520" description="Small ribosomal subunit protein eS27">
    <location>
        <begin position="1"/>
        <end position="57"/>
    </location>
</feature>
<feature type="zinc finger region" description="C4-type" evidence="1">
    <location>
        <begin position="10"/>
        <end position="32"/>
    </location>
</feature>
<feature type="binding site" evidence="1">
    <location>
        <position position="10"/>
    </location>
    <ligand>
        <name>Zn(2+)</name>
        <dbReference type="ChEBI" id="CHEBI:29105"/>
    </ligand>
</feature>
<feature type="binding site" evidence="1">
    <location>
        <position position="13"/>
    </location>
    <ligand>
        <name>Zn(2+)</name>
        <dbReference type="ChEBI" id="CHEBI:29105"/>
    </ligand>
</feature>
<feature type="binding site" evidence="1">
    <location>
        <position position="29"/>
    </location>
    <ligand>
        <name>Zn(2+)</name>
        <dbReference type="ChEBI" id="CHEBI:29105"/>
    </ligand>
</feature>
<feature type="binding site" evidence="1">
    <location>
        <position position="32"/>
    </location>
    <ligand>
        <name>Zn(2+)</name>
        <dbReference type="ChEBI" id="CHEBI:29105"/>
    </ligand>
</feature>
<comment type="cofactor">
    <cofactor evidence="1">
        <name>Zn(2+)</name>
        <dbReference type="ChEBI" id="CHEBI:29105"/>
    </cofactor>
    <text evidence="1">Binds 1 zinc ion per subunit.</text>
</comment>
<comment type="subunit">
    <text evidence="1">Part of the 30S ribosomal subunit.</text>
</comment>
<comment type="similarity">
    <text evidence="1">Belongs to the eukaryotic ribosomal protein eS27 family.</text>
</comment>
<reference key="1">
    <citation type="journal article" date="2008" name="Genomics">
        <title>Evolution in the laboratory: the genome of Halobacterium salinarum strain R1 compared to that of strain NRC-1.</title>
        <authorList>
            <person name="Pfeiffer F."/>
            <person name="Schuster S.C."/>
            <person name="Broicher A."/>
            <person name="Falb M."/>
            <person name="Palm P."/>
            <person name="Rodewald K."/>
            <person name="Ruepp A."/>
            <person name="Soppa J."/>
            <person name="Tittor J."/>
            <person name="Oesterhelt D."/>
        </authorList>
    </citation>
    <scope>NUCLEOTIDE SEQUENCE [LARGE SCALE GENOMIC DNA]</scope>
    <source>
        <strain>ATCC 29341 / DSM 671 / R1</strain>
    </source>
</reference>
<keyword id="KW-0479">Metal-binding</keyword>
<keyword id="KW-0687">Ribonucleoprotein</keyword>
<keyword id="KW-0689">Ribosomal protein</keyword>
<keyword id="KW-0862">Zinc</keyword>
<keyword id="KW-0863">Zinc-finger</keyword>
<evidence type="ECO:0000255" key="1">
    <source>
        <dbReference type="HAMAP-Rule" id="MF_00371"/>
    </source>
</evidence>
<evidence type="ECO:0000305" key="2"/>
<organism>
    <name type="scientific">Halobacterium salinarum (strain ATCC 29341 / DSM 671 / R1)</name>
    <dbReference type="NCBI Taxonomy" id="478009"/>
    <lineage>
        <taxon>Archaea</taxon>
        <taxon>Methanobacteriati</taxon>
        <taxon>Methanobacteriota</taxon>
        <taxon>Stenosarchaea group</taxon>
        <taxon>Halobacteria</taxon>
        <taxon>Halobacteriales</taxon>
        <taxon>Halobacteriaceae</taxon>
        <taxon>Halobacterium</taxon>
        <taxon>Halobacterium salinarum NRC-34001</taxon>
    </lineage>
</organism>
<sequence length="57" mass="5928">MSGGFYNVECPDCENEQTVFGKASTEVACAVCGTTLARPTGGEADLLGEVIETVEAR</sequence>